<dbReference type="PIR" id="B24625">
    <property type="entry name" value="B24625"/>
</dbReference>
<dbReference type="SMR" id="P07406"/>
<dbReference type="GO" id="GO:0072562">
    <property type="term" value="C:blood microparticle"/>
    <property type="evidence" value="ECO:0007669"/>
    <property type="project" value="TreeGrafter"/>
</dbReference>
<dbReference type="GO" id="GO:0031838">
    <property type="term" value="C:haptoglobin-hemoglobin complex"/>
    <property type="evidence" value="ECO:0007669"/>
    <property type="project" value="TreeGrafter"/>
</dbReference>
<dbReference type="GO" id="GO:0005833">
    <property type="term" value="C:hemoglobin complex"/>
    <property type="evidence" value="ECO:0007669"/>
    <property type="project" value="InterPro"/>
</dbReference>
<dbReference type="GO" id="GO:0031720">
    <property type="term" value="F:haptoglobin binding"/>
    <property type="evidence" value="ECO:0007669"/>
    <property type="project" value="TreeGrafter"/>
</dbReference>
<dbReference type="GO" id="GO:0020037">
    <property type="term" value="F:heme binding"/>
    <property type="evidence" value="ECO:0007669"/>
    <property type="project" value="InterPro"/>
</dbReference>
<dbReference type="GO" id="GO:0046872">
    <property type="term" value="F:metal ion binding"/>
    <property type="evidence" value="ECO:0007669"/>
    <property type="project" value="UniProtKB-KW"/>
</dbReference>
<dbReference type="GO" id="GO:0043177">
    <property type="term" value="F:organic acid binding"/>
    <property type="evidence" value="ECO:0007669"/>
    <property type="project" value="TreeGrafter"/>
</dbReference>
<dbReference type="GO" id="GO:0019825">
    <property type="term" value="F:oxygen binding"/>
    <property type="evidence" value="ECO:0007669"/>
    <property type="project" value="InterPro"/>
</dbReference>
<dbReference type="GO" id="GO:0005344">
    <property type="term" value="F:oxygen carrier activity"/>
    <property type="evidence" value="ECO:0007669"/>
    <property type="project" value="UniProtKB-KW"/>
</dbReference>
<dbReference type="GO" id="GO:0004601">
    <property type="term" value="F:peroxidase activity"/>
    <property type="evidence" value="ECO:0007669"/>
    <property type="project" value="TreeGrafter"/>
</dbReference>
<dbReference type="GO" id="GO:0042744">
    <property type="term" value="P:hydrogen peroxide catabolic process"/>
    <property type="evidence" value="ECO:0007669"/>
    <property type="project" value="TreeGrafter"/>
</dbReference>
<dbReference type="CDD" id="cd08925">
    <property type="entry name" value="Hb-beta-like"/>
    <property type="match status" value="1"/>
</dbReference>
<dbReference type="FunFam" id="1.10.490.10:FF:000001">
    <property type="entry name" value="Hemoglobin subunit beta"/>
    <property type="match status" value="1"/>
</dbReference>
<dbReference type="Gene3D" id="1.10.490.10">
    <property type="entry name" value="Globins"/>
    <property type="match status" value="1"/>
</dbReference>
<dbReference type="InterPro" id="IPR000971">
    <property type="entry name" value="Globin"/>
</dbReference>
<dbReference type="InterPro" id="IPR009050">
    <property type="entry name" value="Globin-like_sf"/>
</dbReference>
<dbReference type="InterPro" id="IPR012292">
    <property type="entry name" value="Globin/Proto"/>
</dbReference>
<dbReference type="InterPro" id="IPR002337">
    <property type="entry name" value="Hemoglobin_b"/>
</dbReference>
<dbReference type="InterPro" id="IPR050056">
    <property type="entry name" value="Hemoglobin_oxygen_transport"/>
</dbReference>
<dbReference type="PANTHER" id="PTHR11442">
    <property type="entry name" value="HEMOGLOBIN FAMILY MEMBER"/>
    <property type="match status" value="1"/>
</dbReference>
<dbReference type="PANTHER" id="PTHR11442:SF7">
    <property type="entry name" value="HEMOGLOBIN SUBUNIT EPSILON"/>
    <property type="match status" value="1"/>
</dbReference>
<dbReference type="Pfam" id="PF00042">
    <property type="entry name" value="Globin"/>
    <property type="match status" value="1"/>
</dbReference>
<dbReference type="PRINTS" id="PR00814">
    <property type="entry name" value="BETAHAEM"/>
</dbReference>
<dbReference type="SUPFAM" id="SSF46458">
    <property type="entry name" value="Globin-like"/>
    <property type="match status" value="1"/>
</dbReference>
<dbReference type="PROSITE" id="PS01033">
    <property type="entry name" value="GLOBIN"/>
    <property type="match status" value="1"/>
</dbReference>
<name>HBB_PASMO</name>
<feature type="chain" id="PRO_0000053065" description="Hemoglobin subunit beta">
    <location>
        <begin position="1"/>
        <end position="146"/>
    </location>
</feature>
<feature type="domain" description="Globin" evidence="1">
    <location>
        <begin position="2"/>
        <end position="146"/>
    </location>
</feature>
<feature type="binding site" description="distal binding residue">
    <location>
        <position position="63"/>
    </location>
    <ligand>
        <name>heme b</name>
        <dbReference type="ChEBI" id="CHEBI:60344"/>
    </ligand>
    <ligandPart>
        <name>Fe</name>
        <dbReference type="ChEBI" id="CHEBI:18248"/>
    </ligandPart>
</feature>
<feature type="binding site" description="proximal binding residue">
    <location>
        <position position="92"/>
    </location>
    <ligand>
        <name>heme b</name>
        <dbReference type="ChEBI" id="CHEBI:60344"/>
    </ligand>
    <ligandPart>
        <name>Fe</name>
        <dbReference type="ChEBI" id="CHEBI:18248"/>
    </ligandPart>
</feature>
<organism>
    <name type="scientific">Passer montanus</name>
    <name type="common">Eurasian tree sparrow</name>
    <dbReference type="NCBI Taxonomy" id="9160"/>
    <lineage>
        <taxon>Eukaryota</taxon>
        <taxon>Metazoa</taxon>
        <taxon>Chordata</taxon>
        <taxon>Craniata</taxon>
        <taxon>Vertebrata</taxon>
        <taxon>Euteleostomi</taxon>
        <taxon>Archelosauria</taxon>
        <taxon>Archosauria</taxon>
        <taxon>Dinosauria</taxon>
        <taxon>Saurischia</taxon>
        <taxon>Theropoda</taxon>
        <taxon>Coelurosauria</taxon>
        <taxon>Aves</taxon>
        <taxon>Neognathae</taxon>
        <taxon>Neoaves</taxon>
        <taxon>Telluraves</taxon>
        <taxon>Australaves</taxon>
        <taxon>Passeriformes</taxon>
        <taxon>Passeroidea</taxon>
        <taxon>Passeridae</taxon>
        <taxon>Passer</taxon>
    </lineage>
</organism>
<sequence length="146" mass="16182">VQWTAEEKQLITGLWGKVNVAECGGEALARLLIVYPWTQRFFASFGNLSSPTAVLGNPKVQAHGKKVLTSFGEAVKNLDSIKNTFSQLSELHCDKLHVDPENFRLLGDILVVVLAAHFGKDFTPDCQAAWQKLVRVVAHALARKYH</sequence>
<gene>
    <name type="primary">HBB</name>
</gene>
<accession>P07406</accession>
<comment type="function">
    <text>Involved in oxygen transport from the lung to the various peripheral tissues.</text>
</comment>
<comment type="subunit">
    <text>Heterotetramer of two alpha chains and two beta chains.</text>
</comment>
<comment type="tissue specificity">
    <text>Red blood cells.</text>
</comment>
<comment type="similarity">
    <text evidence="1">Belongs to the globin family.</text>
</comment>
<reference key="1">
    <citation type="journal article" date="1985" name="Biol. Chem. Hoppe-Seyler">
        <title>Hemoglobin of tree sparrows (Passer montanus, Passeriformes): Sequence of the major (Hb A) and minor (Hb D) components.</title>
        <authorList>
            <person name="Schneeganss D."/>
            <person name="Braunitzer G."/>
            <person name="Oberthur W."/>
            <person name="Kosters J."/>
            <person name="Grimm F."/>
        </authorList>
    </citation>
    <scope>PROTEIN SEQUENCE</scope>
</reference>
<keyword id="KW-0903">Direct protein sequencing</keyword>
<keyword id="KW-0349">Heme</keyword>
<keyword id="KW-0408">Iron</keyword>
<keyword id="KW-0479">Metal-binding</keyword>
<keyword id="KW-0561">Oxygen transport</keyword>
<keyword id="KW-0813">Transport</keyword>
<proteinExistence type="evidence at protein level"/>
<protein>
    <recommendedName>
        <fullName>Hemoglobin subunit beta</fullName>
    </recommendedName>
    <alternativeName>
        <fullName>Beta-globin</fullName>
    </alternativeName>
    <alternativeName>
        <fullName>Hemoglobin beta chain</fullName>
    </alternativeName>
</protein>
<evidence type="ECO:0000255" key="1">
    <source>
        <dbReference type="PROSITE-ProRule" id="PRU00238"/>
    </source>
</evidence>